<evidence type="ECO:0000255" key="1">
    <source>
        <dbReference type="HAMAP-Rule" id="MF_00680"/>
    </source>
</evidence>
<comment type="function">
    <text evidence="1">May act as a double-stranded DNA (dsDNA) mimic. Probably regulates the activity of a dsDNA-binding protein.</text>
</comment>
<comment type="similarity">
    <text evidence="1">Belongs to the putative dsDNA mimic protein family.</text>
</comment>
<dbReference type="EMBL" id="CP000746">
    <property type="protein sequence ID" value="ABR74619.1"/>
    <property type="molecule type" value="Genomic_DNA"/>
</dbReference>
<dbReference type="RefSeq" id="WP_012072996.1">
    <property type="nucleotide sequence ID" value="NC_009655.1"/>
</dbReference>
<dbReference type="SMR" id="A6VNS2"/>
<dbReference type="STRING" id="339671.Asuc_1259"/>
<dbReference type="KEGG" id="asu:Asuc_1259"/>
<dbReference type="eggNOG" id="COG3099">
    <property type="taxonomic scope" value="Bacteria"/>
</dbReference>
<dbReference type="HOGENOM" id="CLU_143392_0_0_6"/>
<dbReference type="OrthoDB" id="5677388at2"/>
<dbReference type="Proteomes" id="UP000001114">
    <property type="component" value="Chromosome"/>
</dbReference>
<dbReference type="Gene3D" id="3.10.450.140">
    <property type="entry name" value="dsDNA mimic, putative"/>
    <property type="match status" value="1"/>
</dbReference>
<dbReference type="HAMAP" id="MF_00680">
    <property type="entry name" value="Put_dsDNA_mimic"/>
    <property type="match status" value="1"/>
</dbReference>
<dbReference type="InterPro" id="IPR007376">
    <property type="entry name" value="dsDNA_mimic_put"/>
</dbReference>
<dbReference type="InterPro" id="IPR036763">
    <property type="entry name" value="Put_dsDNA_mimic_sf"/>
</dbReference>
<dbReference type="NCBIfam" id="NF003469">
    <property type="entry name" value="PRK05094.1"/>
    <property type="match status" value="1"/>
</dbReference>
<dbReference type="Pfam" id="PF04269">
    <property type="entry name" value="DUF440"/>
    <property type="match status" value="1"/>
</dbReference>
<dbReference type="PIRSF" id="PIRSF004916">
    <property type="entry name" value="UCP004916"/>
    <property type="match status" value="1"/>
</dbReference>
<dbReference type="SUPFAM" id="SSF102816">
    <property type="entry name" value="Putative dsDNA mimic"/>
    <property type="match status" value="1"/>
</dbReference>
<reference key="1">
    <citation type="journal article" date="2010" name="BMC Genomics">
        <title>A genomic perspective on the potential of Actinobacillus succinogenes for industrial succinate production.</title>
        <authorList>
            <person name="McKinlay J.B."/>
            <person name="Laivenieks M."/>
            <person name="Schindler B.D."/>
            <person name="McKinlay A.A."/>
            <person name="Siddaramappa S."/>
            <person name="Challacombe J.F."/>
            <person name="Lowry S.R."/>
            <person name="Clum A."/>
            <person name="Lapidus A.L."/>
            <person name="Burkhart K.B."/>
            <person name="Harkins V."/>
            <person name="Vieille C."/>
        </authorList>
    </citation>
    <scope>NUCLEOTIDE SEQUENCE [LARGE SCALE GENOMIC DNA]</scope>
    <source>
        <strain>ATCC 55618 / DSM 22257 / CCUG 43843 / 130Z</strain>
    </source>
</reference>
<feature type="chain" id="PRO_1000072730" description="Putative double-stranded DNA mimic protein Asuc_1259">
    <location>
        <begin position="1"/>
        <end position="107"/>
    </location>
</feature>
<protein>
    <recommendedName>
        <fullName evidence="1">Putative double-stranded DNA mimic protein Asuc_1259</fullName>
    </recommendedName>
</protein>
<organism>
    <name type="scientific">Actinobacillus succinogenes (strain ATCC 55618 / DSM 22257 / CCUG 43843 / 130Z)</name>
    <dbReference type="NCBI Taxonomy" id="339671"/>
    <lineage>
        <taxon>Bacteria</taxon>
        <taxon>Pseudomonadati</taxon>
        <taxon>Pseudomonadota</taxon>
        <taxon>Gammaproteobacteria</taxon>
        <taxon>Pasteurellales</taxon>
        <taxon>Pasteurellaceae</taxon>
        <taxon>Actinobacillus</taxon>
    </lineage>
</organism>
<accession>A6VNS2</accession>
<name>Y1259_ACTSZ</name>
<gene>
    <name type="ordered locus">Asuc_1259</name>
</gene>
<keyword id="KW-1185">Reference proteome</keyword>
<sequence>MTEQIKKLDPDTAIDIAYDIFLEMAPENLDPADILLFNMQFEERGAVEFVETADNWDEEIGVLIDPEEYAEVWIGLLNEKDEMDDVFAKFLISHREEDREYHIVWKE</sequence>
<proteinExistence type="inferred from homology"/>